<organism>
    <name type="scientific">Pyrococcus horikoshii (strain ATCC 700860 / DSM 12428 / JCM 9974 / NBRC 100139 / OT-3)</name>
    <dbReference type="NCBI Taxonomy" id="70601"/>
    <lineage>
        <taxon>Archaea</taxon>
        <taxon>Methanobacteriati</taxon>
        <taxon>Methanobacteriota</taxon>
        <taxon>Thermococci</taxon>
        <taxon>Thermococcales</taxon>
        <taxon>Thermococcaceae</taxon>
        <taxon>Pyrococcus</taxon>
    </lineage>
</organism>
<protein>
    <recommendedName>
        <fullName evidence="1">Replication factor C large subunit</fullName>
        <shortName evidence="1">RFC large subunit</shortName>
    </recommendedName>
    <alternativeName>
        <fullName evidence="1">Clamp loader large subunit</fullName>
    </alternativeName>
</protein>
<sequence>MPDVPWIEKYRPRKLSEIVNQEQALEKVRAWIESWLHGNPPKKKALLLAGPPGSGKTTTVYALAHEYNFEVIELNASDERTYNKIARYVQAAYTMDIMGKRRKIIFLDEADNIEPSGAPEIAKLIDKARNPIIMAANHYWEVPKEIRDRAELVEYKRLNQRDVISALVRILKREGITVPKEILTEIAKRSSGDLRAAINDLQTIVAGGYEDAKYVLAYRDVEKTVFQSLGMVFSSDNAKRAKLALMNLDMSPDEFLLWVDENIPHMYLKPEEMARAYEAISRADIYLGRAQRTGNYSLWKYAIDMMTAGVAVAGTKKKGFAKFYPPNTLKMLAESKEERSIRDSIIKKIMKEMHMSKLEALETMKILRTIFENNLDLAAHFTVFLELTEKEVEFLAGKEKAGTIWGKTLSIRRRIKETEKIEEKAVEEKVEEEEAEEEEEEERKEEEKPKAEKKKGKQVTLFDFIKKN</sequence>
<dbReference type="EMBL" id="BA000001">
    <property type="protein sequence ID" value="BAA29182.1"/>
    <property type="molecule type" value="Genomic_DNA"/>
</dbReference>
<dbReference type="PIR" id="G71231">
    <property type="entry name" value="G71231"/>
</dbReference>
<dbReference type="RefSeq" id="WP_010884229.1">
    <property type="nucleotide sequence ID" value="NC_000961.1"/>
</dbReference>
<dbReference type="SMR" id="O57853"/>
<dbReference type="STRING" id="70601.gene:9377021"/>
<dbReference type="EnsemblBacteria" id="BAA29182">
    <property type="protein sequence ID" value="BAA29182"/>
    <property type="gene ID" value="BAA29182"/>
</dbReference>
<dbReference type="GeneID" id="1444011"/>
<dbReference type="KEGG" id="pho:PH0113"/>
<dbReference type="eggNOG" id="arCOG00470">
    <property type="taxonomic scope" value="Archaea"/>
</dbReference>
<dbReference type="OrthoDB" id="8658at2157"/>
<dbReference type="Proteomes" id="UP000000752">
    <property type="component" value="Chromosome"/>
</dbReference>
<dbReference type="GO" id="GO:0005524">
    <property type="term" value="F:ATP binding"/>
    <property type="evidence" value="ECO:0007669"/>
    <property type="project" value="UniProtKB-UniRule"/>
</dbReference>
<dbReference type="GO" id="GO:0016887">
    <property type="term" value="F:ATP hydrolysis activity"/>
    <property type="evidence" value="ECO:0007669"/>
    <property type="project" value="InterPro"/>
</dbReference>
<dbReference type="GO" id="GO:0003689">
    <property type="term" value="F:DNA clamp loader activity"/>
    <property type="evidence" value="ECO:0007669"/>
    <property type="project" value="UniProtKB-UniRule"/>
</dbReference>
<dbReference type="GO" id="GO:0006260">
    <property type="term" value="P:DNA replication"/>
    <property type="evidence" value="ECO:0007669"/>
    <property type="project" value="UniProtKB-UniRule"/>
</dbReference>
<dbReference type="CDD" id="cd00009">
    <property type="entry name" value="AAA"/>
    <property type="match status" value="1"/>
</dbReference>
<dbReference type="CDD" id="cd18140">
    <property type="entry name" value="HLD_clamp_RFC"/>
    <property type="match status" value="1"/>
</dbReference>
<dbReference type="Gene3D" id="1.10.8.60">
    <property type="match status" value="1"/>
</dbReference>
<dbReference type="Gene3D" id="3.40.50.300">
    <property type="entry name" value="P-loop containing nucleotide triphosphate hydrolases"/>
    <property type="match status" value="1"/>
</dbReference>
<dbReference type="HAMAP" id="MF_01508">
    <property type="entry name" value="RfcL"/>
    <property type="match status" value="1"/>
</dbReference>
<dbReference type="InterPro" id="IPR003593">
    <property type="entry name" value="AAA+_ATPase"/>
</dbReference>
<dbReference type="InterPro" id="IPR003959">
    <property type="entry name" value="ATPase_AAA_core"/>
</dbReference>
<dbReference type="InterPro" id="IPR027417">
    <property type="entry name" value="P-loop_NTPase"/>
</dbReference>
<dbReference type="InterPro" id="IPR023935">
    <property type="entry name" value="Rep_factor-C_lsu"/>
</dbReference>
<dbReference type="InterPro" id="IPR047854">
    <property type="entry name" value="RFC_lid"/>
</dbReference>
<dbReference type="NCBIfam" id="NF003227">
    <property type="entry name" value="PRK04195.1-2"/>
    <property type="match status" value="1"/>
</dbReference>
<dbReference type="NCBIfam" id="NF003229">
    <property type="entry name" value="PRK04195.1-5"/>
    <property type="match status" value="1"/>
</dbReference>
<dbReference type="PANTHER" id="PTHR23389">
    <property type="entry name" value="CHROMOSOME TRANSMISSION FIDELITY FACTOR 18"/>
    <property type="match status" value="1"/>
</dbReference>
<dbReference type="PANTHER" id="PTHR23389:SF6">
    <property type="entry name" value="REPLICATION FACTOR C SUBUNIT 1"/>
    <property type="match status" value="1"/>
</dbReference>
<dbReference type="Pfam" id="PF00004">
    <property type="entry name" value="AAA"/>
    <property type="match status" value="1"/>
</dbReference>
<dbReference type="Pfam" id="PF21960">
    <property type="entry name" value="RCF1-5-like_lid"/>
    <property type="match status" value="1"/>
</dbReference>
<dbReference type="SMART" id="SM00382">
    <property type="entry name" value="AAA"/>
    <property type="match status" value="1"/>
</dbReference>
<dbReference type="SUPFAM" id="SSF52540">
    <property type="entry name" value="P-loop containing nucleoside triphosphate hydrolases"/>
    <property type="match status" value="1"/>
</dbReference>
<reference key="1">
    <citation type="journal article" date="1998" name="DNA Res.">
        <title>Complete sequence and gene organization of the genome of a hyper-thermophilic archaebacterium, Pyrococcus horikoshii OT3.</title>
        <authorList>
            <person name="Kawarabayasi Y."/>
            <person name="Sawada M."/>
            <person name="Horikawa H."/>
            <person name="Haikawa Y."/>
            <person name="Hino Y."/>
            <person name="Yamamoto S."/>
            <person name="Sekine M."/>
            <person name="Baba S."/>
            <person name="Kosugi H."/>
            <person name="Hosoyama A."/>
            <person name="Nagai Y."/>
            <person name="Sakai M."/>
            <person name="Ogura K."/>
            <person name="Otsuka R."/>
            <person name="Nakazawa H."/>
            <person name="Takamiya M."/>
            <person name="Ohfuku Y."/>
            <person name="Funahashi T."/>
            <person name="Tanaka T."/>
            <person name="Kudoh Y."/>
            <person name="Yamazaki J."/>
            <person name="Kushida N."/>
            <person name="Oguchi A."/>
            <person name="Aoki K."/>
            <person name="Yoshizawa T."/>
            <person name="Nakamura Y."/>
            <person name="Robb F.T."/>
            <person name="Horikoshi K."/>
            <person name="Masuchi Y."/>
            <person name="Shizuya H."/>
            <person name="Kikuchi H."/>
        </authorList>
    </citation>
    <scope>NUCLEOTIDE SEQUENCE [LARGE SCALE GENOMIC DNA]</scope>
    <source>
        <strain>ATCC 700860 / DSM 12428 / JCM 9974 / NBRC 100139 / OT-3</strain>
    </source>
</reference>
<gene>
    <name evidence="1" type="primary">rfcL</name>
    <name type="ordered locus">PH0113</name>
</gene>
<feature type="chain" id="PRO_0000135963" description="Replication factor C large subunit">
    <location>
        <begin position="1"/>
        <end position="468"/>
    </location>
</feature>
<feature type="region of interest" description="Disordered" evidence="2">
    <location>
        <begin position="422"/>
        <end position="456"/>
    </location>
</feature>
<feature type="compositionally biased region" description="Acidic residues" evidence="2">
    <location>
        <begin position="429"/>
        <end position="444"/>
    </location>
</feature>
<feature type="binding site" evidence="1">
    <location>
        <begin position="50"/>
        <end position="57"/>
    </location>
    <ligand>
        <name>ATP</name>
        <dbReference type="ChEBI" id="CHEBI:30616"/>
    </ligand>
</feature>
<name>RFCL_PYRHO</name>
<proteinExistence type="inferred from homology"/>
<accession>O57853</accession>
<evidence type="ECO:0000255" key="1">
    <source>
        <dbReference type="HAMAP-Rule" id="MF_01508"/>
    </source>
</evidence>
<evidence type="ECO:0000256" key="2">
    <source>
        <dbReference type="SAM" id="MobiDB-lite"/>
    </source>
</evidence>
<keyword id="KW-0067">ATP-binding</keyword>
<keyword id="KW-0235">DNA replication</keyword>
<keyword id="KW-0547">Nucleotide-binding</keyword>
<comment type="function">
    <text evidence="1">Part of the RFC clamp loader complex which loads the PCNA sliding clamp onto DNA.</text>
</comment>
<comment type="subunit">
    <text evidence="1">Heteromultimer composed of small subunits (RfcS) and large subunits (RfcL).</text>
</comment>
<comment type="similarity">
    <text evidence="1">Belongs to the activator 1 small subunits family. RfcL subfamily.</text>
</comment>